<name>CAS7_THETK</name>
<protein>
    <recommendedName>
        <fullName>CRISPR-associated protein Cas7/Cst2/DevR</fullName>
    </recommendedName>
    <alternativeName>
        <fullName>CRISPR-associated protein Cas7/Csa2, subtype I-A/Apern</fullName>
    </alternativeName>
</protein>
<comment type="function">
    <text evidence="1">CRISPR (clustered regularly interspaced short palindromic repeat) is an adaptive immune system that provides protection against mobile genetic elements (viruses, transposable elements and conjugative plasmids). CRISPR clusters contain spacers, sequences complementary to antecedent mobile elements, and target invading nucleic acids. CRISPR clusters are transcribed and processed into CRISPR RNA (crRNA) (By similarity).</text>
</comment>
<comment type="subunit">
    <text evidence="2">Can form a Cascade complex with Csa5, Cas5a, Cas3, Cas3' and Cas8a2.</text>
</comment>
<comment type="induction">
    <text evidence="2">Repressed by 5 J/m2 ultraviolet light and 50 mM NaCl, slightly induced by 20 J/m2 ultraviolet light, 100 and 150 mM Nacl. Member of the csa5-cas7-cas5a-cas3-cas3'-cas8a2 operon.</text>
</comment>
<comment type="similarity">
    <text evidence="3">Belongs to the CRISPR-associated protein Cas7/Cst2/DevR family. Subtype I-a/Apern subfamily.</text>
</comment>
<feature type="chain" id="PRO_0000422236" description="CRISPR-associated protein Cas7/Cst2/DevR">
    <location>
        <begin position="1"/>
        <end position="329"/>
    </location>
</feature>
<organism>
    <name type="scientific">Thermoproteus tenax (strain ATCC 35583 / DSM 2078 / JCM 9277 / NBRC 100435 / Kra 1)</name>
    <dbReference type="NCBI Taxonomy" id="768679"/>
    <lineage>
        <taxon>Archaea</taxon>
        <taxon>Thermoproteota</taxon>
        <taxon>Thermoprotei</taxon>
        <taxon>Thermoproteales</taxon>
        <taxon>Thermoproteaceae</taxon>
        <taxon>Thermoproteus</taxon>
    </lineage>
</organism>
<evidence type="ECO:0000250" key="1"/>
<evidence type="ECO:0000269" key="2">
    <source>
    </source>
</evidence>
<evidence type="ECO:0000305" key="3"/>
<gene>
    <name type="primary">cas7</name>
    <name type="ordered locus">TTX_1251</name>
</gene>
<proteinExistence type="evidence at protein level"/>
<keyword id="KW-0051">Antiviral defense</keyword>
<keyword id="KW-1185">Reference proteome</keyword>
<accession>G4RJZ1</accession>
<reference key="1">
    <citation type="journal article" date="2011" name="PLoS ONE">
        <title>The complete genome sequence of Thermoproteus tenax: a physiologically versatile member of the Crenarchaeota.</title>
        <authorList>
            <person name="Siebers B."/>
            <person name="Zaparty M."/>
            <person name="Raddatz G."/>
            <person name="Tjaden B."/>
            <person name="Albers S.V."/>
            <person name="Bell S.D."/>
            <person name="Blombach F."/>
            <person name="Kletzin A."/>
            <person name="Kyrpides N."/>
            <person name="Lanz C."/>
            <person name="Plagens A."/>
            <person name="Rampp M."/>
            <person name="Rosinus A."/>
            <person name="von Jan M."/>
            <person name="Makarova K.S."/>
            <person name="Klenk H.P."/>
            <person name="Schuster S.C."/>
            <person name="Hensel R."/>
        </authorList>
    </citation>
    <scope>NUCLEOTIDE SEQUENCE [LARGE SCALE GENOMIC DNA]</scope>
    <source>
        <strain>ATCC 35583 / DSM 2078 / JCM 9277 / NBRC 100435 / Kra 1</strain>
    </source>
</reference>
<reference key="2">
    <citation type="journal article" date="2012" name="J. Bacteriol.">
        <title>Characterization of the CRISPR/Cas subtype I-A system of the hyperthermophilic crenarchaeon Thermoproteus tenax.</title>
        <authorList>
            <person name="Plagens A."/>
            <person name="Tjaden B."/>
            <person name="Hagemann A."/>
            <person name="Randau L."/>
            <person name="Hensel R."/>
        </authorList>
    </citation>
    <scope>SUBUNIT</scope>
    <scope>INDUCTION</scope>
    <scope>OPERON STRUCTURE</scope>
    <source>
        <strain>ATCC 35583 / DSM 2078 / JCM 9277 / NBRC 100435 / Kra 1</strain>
    </source>
</reference>
<sequence length="329" mass="35903">MRVAPPYVRAAGRFEAQLSVLTGAGNMGNYNMHAVAKVIHGGKAYEVPVLTGNALKHWHSVYLAEVYQDLGGTQLNEFCKKGVGLRGKNMSGEDASSEAEAIKDLCNDLHGFLLPDKQIKRDSLVRVSFAVPVLEEKNLEAASKFAVVHNRVDPFKRTQQVKSKEEQEGTEMMVFKQEYSSAVYGFAAAMDLGLSGVPLYQEGESGVDDRERALRIKSALVALLRLFNGVGSKQARALPIARLRELVIAISDSPIPNLVHGAYPDYVARSAELLTAYLKAVGKKGVVLCYGVDCPQSNNVLECKKADTLDDLFQEALRRALPGGQPARR</sequence>
<dbReference type="EMBL" id="FN869859">
    <property type="protein sequence ID" value="CCC81886.1"/>
    <property type="molecule type" value="Genomic_DNA"/>
</dbReference>
<dbReference type="RefSeq" id="WP_014127141.1">
    <property type="nucleotide sequence ID" value="NC_016070.1"/>
</dbReference>
<dbReference type="SMR" id="G4RJZ1"/>
<dbReference type="STRING" id="768679.TTX_1251"/>
<dbReference type="PaxDb" id="768679-TTX_1251"/>
<dbReference type="GeneID" id="11262131"/>
<dbReference type="KEGG" id="ttn:TTX_1251"/>
<dbReference type="PATRIC" id="fig|768679.9.peg.1264"/>
<dbReference type="eggNOG" id="arCOG03617">
    <property type="taxonomic scope" value="Archaea"/>
</dbReference>
<dbReference type="HOGENOM" id="CLU_054331_1_0_2"/>
<dbReference type="OrthoDB" id="97643at2157"/>
<dbReference type="Proteomes" id="UP000002654">
    <property type="component" value="Chromosome"/>
</dbReference>
<dbReference type="GO" id="GO:0051607">
    <property type="term" value="P:defense response to virus"/>
    <property type="evidence" value="ECO:0007669"/>
    <property type="project" value="UniProtKB-KW"/>
</dbReference>
<dbReference type="InterPro" id="IPR002764">
    <property type="entry name" value="Cas7/Cst2/DevR_sub_I-a/Apern"/>
</dbReference>
<dbReference type="InterPro" id="IPR010154">
    <property type="entry name" value="CRISPR-assoc_Cas7/Cst2/DevR"/>
</dbReference>
<dbReference type="InterPro" id="IPR052681">
    <property type="entry name" value="CRISPR-Cas7/Cst2/DevR"/>
</dbReference>
<dbReference type="NCBIfam" id="TIGR01875">
    <property type="entry name" value="cas_MJ0381"/>
    <property type="match status" value="1"/>
</dbReference>
<dbReference type="NCBIfam" id="TIGR02583">
    <property type="entry name" value="DevR_archaea"/>
    <property type="match status" value="1"/>
</dbReference>
<dbReference type="PANTHER" id="PTHR37459">
    <property type="match status" value="1"/>
</dbReference>
<dbReference type="PANTHER" id="PTHR37459:SF1">
    <property type="entry name" value="CRISPR-ASSOCIATED PROTEIN CAS7_CST2_DEVR"/>
    <property type="match status" value="1"/>
</dbReference>
<dbReference type="Pfam" id="PF01905">
    <property type="entry name" value="DevR"/>
    <property type="match status" value="1"/>
</dbReference>